<sequence length="284" mass="32492">MVLMIVSGRSGSGKSVALRALEDMGFYCVDNLPVVLLPDLARTLADREISAAVSIDVRNMPESPEIFEQAMSNLPDAFSPQLLFLDADRNTLIRRYSDTRRLHPLSSKNLSLESAIDKESDLLEPLRSRADLIVDTSEMSVHELAEMLRTRLLGKRERELTMVFESFGFKHGIPIDADYVFDVRFLPNPHWDPKLRPMTGLDKPVAAFLDRHTEVHNFIYQTRSYLELWLPMLETNNRSYLTVAIGCTGGKHRSVYIAEQLADYFRSRGKNVQSRHRTLEKRKP</sequence>
<gene>
    <name evidence="1" type="primary">rapZ</name>
    <name type="ordered locus">UTI89_C3641</name>
</gene>
<evidence type="ECO:0000255" key="1">
    <source>
        <dbReference type="HAMAP-Rule" id="MF_00636"/>
    </source>
</evidence>
<keyword id="KW-0067">ATP-binding</keyword>
<keyword id="KW-0342">GTP-binding</keyword>
<keyword id="KW-0547">Nucleotide-binding</keyword>
<keyword id="KW-0694">RNA-binding</keyword>
<proteinExistence type="inferred from homology"/>
<reference key="1">
    <citation type="journal article" date="2006" name="Proc. Natl. Acad. Sci. U.S.A.">
        <title>Identification of genes subject to positive selection in uropathogenic strains of Escherichia coli: a comparative genomics approach.</title>
        <authorList>
            <person name="Chen S.L."/>
            <person name="Hung C.-S."/>
            <person name="Xu J."/>
            <person name="Reigstad C.S."/>
            <person name="Magrini V."/>
            <person name="Sabo A."/>
            <person name="Blasiar D."/>
            <person name="Bieri T."/>
            <person name="Meyer R.R."/>
            <person name="Ozersky P."/>
            <person name="Armstrong J.R."/>
            <person name="Fulton R.S."/>
            <person name="Latreille J.P."/>
            <person name="Spieth J."/>
            <person name="Hooton T.M."/>
            <person name="Mardis E.R."/>
            <person name="Hultgren S.J."/>
            <person name="Gordon J.I."/>
        </authorList>
    </citation>
    <scope>NUCLEOTIDE SEQUENCE [LARGE SCALE GENOMIC DNA]</scope>
    <source>
        <strain>UTI89 / UPEC</strain>
    </source>
</reference>
<protein>
    <recommendedName>
        <fullName evidence="1">RNase adapter protein RapZ</fullName>
    </recommendedName>
</protein>
<accession>Q1R6C9</accession>
<dbReference type="EMBL" id="CP000243">
    <property type="protein sequence ID" value="ABE09085.1"/>
    <property type="molecule type" value="Genomic_DNA"/>
</dbReference>
<dbReference type="RefSeq" id="WP_000243741.1">
    <property type="nucleotide sequence ID" value="NZ_CP064825.1"/>
</dbReference>
<dbReference type="SMR" id="Q1R6C9"/>
<dbReference type="GeneID" id="93778776"/>
<dbReference type="KEGG" id="eci:UTI89_C3641"/>
<dbReference type="HOGENOM" id="CLU_059558_1_1_6"/>
<dbReference type="Proteomes" id="UP000001952">
    <property type="component" value="Chromosome"/>
</dbReference>
<dbReference type="GO" id="GO:0005524">
    <property type="term" value="F:ATP binding"/>
    <property type="evidence" value="ECO:0007669"/>
    <property type="project" value="UniProtKB-UniRule"/>
</dbReference>
<dbReference type="GO" id="GO:0005525">
    <property type="term" value="F:GTP binding"/>
    <property type="evidence" value="ECO:0007669"/>
    <property type="project" value="UniProtKB-UniRule"/>
</dbReference>
<dbReference type="GO" id="GO:0003723">
    <property type="term" value="F:RNA binding"/>
    <property type="evidence" value="ECO:0007669"/>
    <property type="project" value="UniProtKB-KW"/>
</dbReference>
<dbReference type="Gene3D" id="3.40.50.300">
    <property type="entry name" value="P-loop containing nucleotide triphosphate hydrolases"/>
    <property type="match status" value="1"/>
</dbReference>
<dbReference type="HAMAP" id="MF_00636">
    <property type="entry name" value="RapZ_like"/>
    <property type="match status" value="1"/>
</dbReference>
<dbReference type="InterPro" id="IPR027417">
    <property type="entry name" value="P-loop_NTPase"/>
</dbReference>
<dbReference type="InterPro" id="IPR005337">
    <property type="entry name" value="RapZ-like"/>
</dbReference>
<dbReference type="InterPro" id="IPR053930">
    <property type="entry name" value="RapZ-like_N"/>
</dbReference>
<dbReference type="InterPro" id="IPR053931">
    <property type="entry name" value="RapZ_C"/>
</dbReference>
<dbReference type="NCBIfam" id="NF003828">
    <property type="entry name" value="PRK05416.1"/>
    <property type="match status" value="1"/>
</dbReference>
<dbReference type="PANTHER" id="PTHR30448">
    <property type="entry name" value="RNASE ADAPTER PROTEIN RAPZ"/>
    <property type="match status" value="1"/>
</dbReference>
<dbReference type="PANTHER" id="PTHR30448:SF0">
    <property type="entry name" value="RNASE ADAPTER PROTEIN RAPZ"/>
    <property type="match status" value="1"/>
</dbReference>
<dbReference type="Pfam" id="PF22740">
    <property type="entry name" value="PapZ_C"/>
    <property type="match status" value="1"/>
</dbReference>
<dbReference type="Pfam" id="PF03668">
    <property type="entry name" value="RapZ-like_N"/>
    <property type="match status" value="1"/>
</dbReference>
<dbReference type="PIRSF" id="PIRSF005052">
    <property type="entry name" value="P-loopkin"/>
    <property type="match status" value="1"/>
</dbReference>
<dbReference type="SUPFAM" id="SSF52540">
    <property type="entry name" value="P-loop containing nucleoside triphosphate hydrolases"/>
    <property type="match status" value="1"/>
</dbReference>
<feature type="chain" id="PRO_0000258962" description="RNase adapter protein RapZ">
    <location>
        <begin position="1"/>
        <end position="284"/>
    </location>
</feature>
<feature type="region of interest" description="RNA-binding" evidence="1">
    <location>
        <begin position="266"/>
        <end position="284"/>
    </location>
</feature>
<feature type="binding site" evidence="1">
    <location>
        <begin position="8"/>
        <end position="15"/>
    </location>
    <ligand>
        <name>ATP</name>
        <dbReference type="ChEBI" id="CHEBI:30616"/>
    </ligand>
</feature>
<feature type="binding site" evidence="1">
    <location>
        <begin position="56"/>
        <end position="59"/>
    </location>
    <ligand>
        <name>GTP</name>
        <dbReference type="ChEBI" id="CHEBI:37565"/>
    </ligand>
</feature>
<name>RAPZ_ECOUT</name>
<organism>
    <name type="scientific">Escherichia coli (strain UTI89 / UPEC)</name>
    <dbReference type="NCBI Taxonomy" id="364106"/>
    <lineage>
        <taxon>Bacteria</taxon>
        <taxon>Pseudomonadati</taxon>
        <taxon>Pseudomonadota</taxon>
        <taxon>Gammaproteobacteria</taxon>
        <taxon>Enterobacterales</taxon>
        <taxon>Enterobacteriaceae</taxon>
        <taxon>Escherichia</taxon>
    </lineage>
</organism>
<comment type="function">
    <text evidence="1">Modulates the synthesis of GlmS, by affecting the processing and stability of the regulatory small RNA GlmZ. When glucosamine-6-phosphate (GlcN6P) concentrations are high in the cell, RapZ binds GlmZ and targets it to cleavage by RNase E. Consequently, GlmZ is inactivated and unable to activate GlmS synthesis. Under low GlcN6P concentrations, RapZ is sequestered and inactivated by an other regulatory small RNA, GlmY, preventing GlmZ degradation and leading to synthesis of GlmS.</text>
</comment>
<comment type="subunit">
    <text evidence="1">Homotrimer.</text>
</comment>
<comment type="similarity">
    <text evidence="1">Belongs to the RapZ-like family. RapZ subfamily.</text>
</comment>